<name>YQU3_CAEEL</name>
<proteinExistence type="inferred from homology"/>
<dbReference type="EMBL" id="Z47072">
    <property type="protein sequence ID" value="CAA87369.4"/>
    <property type="molecule type" value="Genomic_DNA"/>
</dbReference>
<dbReference type="EMBL" id="Z47072">
    <property type="protein sequence ID" value="CAR31484.2"/>
    <property type="molecule type" value="Genomic_DNA"/>
</dbReference>
<dbReference type="EMBL" id="Z47072">
    <property type="protein sequence ID" value="CAR31485.2"/>
    <property type="molecule type" value="Genomic_DNA"/>
</dbReference>
<dbReference type="EMBL" id="Z47072">
    <property type="protein sequence ID" value="CAR31486.2"/>
    <property type="molecule type" value="Genomic_DNA"/>
</dbReference>
<dbReference type="EMBL" id="Z47072">
    <property type="protein sequence ID" value="CAR31487.2"/>
    <property type="molecule type" value="Genomic_DNA"/>
</dbReference>
<dbReference type="PIR" id="T21389">
    <property type="entry name" value="T21389"/>
</dbReference>
<dbReference type="RefSeq" id="NP_001129813.2">
    <property type="nucleotide sequence ID" value="NM_001136341.2"/>
</dbReference>
<dbReference type="RefSeq" id="NP_001129814.2">
    <property type="nucleotide sequence ID" value="NM_001136342.2"/>
</dbReference>
<dbReference type="RefSeq" id="NP_001129815.2">
    <property type="nucleotide sequence ID" value="NM_001136343.2"/>
</dbReference>
<dbReference type="RefSeq" id="NP_001129816.2">
    <property type="nucleotide sequence ID" value="NM_001136344.2"/>
</dbReference>
<dbReference type="RefSeq" id="NP_496139.4">
    <property type="nucleotide sequence ID" value="NM_063738.4"/>
</dbReference>
<dbReference type="FunCoup" id="Q09550">
    <property type="interactions" value="1291"/>
</dbReference>
<dbReference type="STRING" id="6239.F26C11.3b.1"/>
<dbReference type="PaxDb" id="6239-F26C11.3b"/>
<dbReference type="EnsemblMetazoa" id="F26C11.3a.1">
    <property type="protein sequence ID" value="F26C11.3a.1"/>
    <property type="gene ID" value="WBGene00009147"/>
</dbReference>
<dbReference type="EnsemblMetazoa" id="F26C11.3b.1">
    <property type="protein sequence ID" value="F26C11.3b.1"/>
    <property type="gene ID" value="WBGene00009147"/>
</dbReference>
<dbReference type="EnsemblMetazoa" id="F26C11.3c.1">
    <property type="protein sequence ID" value="F26C11.3c.1"/>
    <property type="gene ID" value="WBGene00009147"/>
</dbReference>
<dbReference type="EnsemblMetazoa" id="F26C11.3d.1">
    <property type="protein sequence ID" value="F26C11.3d.1"/>
    <property type="gene ID" value="WBGene00009147"/>
</dbReference>
<dbReference type="EnsemblMetazoa" id="F26C11.3f.1">
    <property type="protein sequence ID" value="F26C11.3f.1"/>
    <property type="gene ID" value="WBGene00009147"/>
</dbReference>
<dbReference type="UCSC" id="F26C11.3">
    <molecule id="Q09550-1"/>
    <property type="organism name" value="c. elegans"/>
</dbReference>
<dbReference type="AGR" id="WB:WBGene00009147"/>
<dbReference type="WormBase" id="F26C11.3a">
    <molecule id="Q09550-2"/>
    <property type="protein sequence ID" value="CE46401"/>
    <property type="gene ID" value="WBGene00009147"/>
</dbReference>
<dbReference type="WormBase" id="F26C11.3b">
    <molecule id="Q09550-1"/>
    <property type="protein sequence ID" value="CE46248"/>
    <property type="gene ID" value="WBGene00009147"/>
</dbReference>
<dbReference type="WormBase" id="F26C11.3c">
    <molecule id="Q09550-3"/>
    <property type="protein sequence ID" value="CE46189"/>
    <property type="gene ID" value="WBGene00009147"/>
</dbReference>
<dbReference type="WormBase" id="F26C11.3d">
    <molecule id="Q09550-4"/>
    <property type="protein sequence ID" value="CE46533"/>
    <property type="gene ID" value="WBGene00009147"/>
</dbReference>
<dbReference type="WormBase" id="F26C11.3f">
    <molecule id="Q09550-5"/>
    <property type="protein sequence ID" value="CE46310"/>
    <property type="gene ID" value="WBGene00009147"/>
</dbReference>
<dbReference type="eggNOG" id="ENOG502S5I0">
    <property type="taxonomic scope" value="Eukaryota"/>
</dbReference>
<dbReference type="InParanoid" id="Q09550"/>
<dbReference type="OMA" id="LTAYKNC"/>
<dbReference type="PRO" id="PR:Q09550"/>
<dbReference type="Proteomes" id="UP000001940">
    <property type="component" value="Chromosome II"/>
</dbReference>
<dbReference type="Bgee" id="WBGene00009147">
    <property type="expression patterns" value="Expressed in material anatomical entity and 2 other cell types or tissues"/>
</dbReference>
<dbReference type="GO" id="GO:0005576">
    <property type="term" value="C:extracellular region"/>
    <property type="evidence" value="ECO:0007669"/>
    <property type="project" value="UniProtKB-SubCell"/>
</dbReference>
<dbReference type="CDD" id="cd00033">
    <property type="entry name" value="CCP"/>
    <property type="match status" value="1"/>
</dbReference>
<dbReference type="InterPro" id="IPR042312">
    <property type="entry name" value="F26C11.3-like"/>
</dbReference>
<dbReference type="InterPro" id="IPR035976">
    <property type="entry name" value="Sushi/SCR/CCP_sf"/>
</dbReference>
<dbReference type="InterPro" id="IPR000436">
    <property type="entry name" value="Sushi_SCR_CCP_dom"/>
</dbReference>
<dbReference type="PANTHER" id="PTHR40289">
    <property type="entry name" value="PROTEIN CBG04714"/>
    <property type="match status" value="1"/>
</dbReference>
<dbReference type="PANTHER" id="PTHR40289:SF1">
    <property type="entry name" value="SUSHI DOMAIN-CONTAINING PROTEIN"/>
    <property type="match status" value="1"/>
</dbReference>
<dbReference type="SMART" id="SM00032">
    <property type="entry name" value="CCP"/>
    <property type="match status" value="1"/>
</dbReference>
<dbReference type="SUPFAM" id="SSF57535">
    <property type="entry name" value="Complement control module/SCR domain"/>
    <property type="match status" value="1"/>
</dbReference>
<dbReference type="PROSITE" id="PS50923">
    <property type="entry name" value="SUSHI"/>
    <property type="match status" value="1"/>
</dbReference>
<gene>
    <name type="ORF">F26C11.3</name>
</gene>
<reference key="1">
    <citation type="journal article" date="1998" name="Science">
        <title>Genome sequence of the nematode C. elegans: a platform for investigating biology.</title>
        <authorList>
            <consortium name="The C. elegans sequencing consortium"/>
        </authorList>
    </citation>
    <scope>NUCLEOTIDE SEQUENCE [LARGE SCALE GENOMIC DNA]</scope>
    <scope>ALTERNATIVE SPLICING</scope>
    <source>
        <strain>Bristol N2</strain>
    </source>
</reference>
<evidence type="ECO:0000255" key="1"/>
<evidence type="ECO:0000255" key="2">
    <source>
        <dbReference type="PROSITE-ProRule" id="PRU00302"/>
    </source>
</evidence>
<evidence type="ECO:0000256" key="3">
    <source>
        <dbReference type="SAM" id="MobiDB-lite"/>
    </source>
</evidence>
<evidence type="ECO:0000305" key="4"/>
<keyword id="KW-0025">Alternative splicing</keyword>
<keyword id="KW-1015">Disulfide bond</keyword>
<keyword id="KW-1185">Reference proteome</keyword>
<keyword id="KW-0964">Secreted</keyword>
<keyword id="KW-0732">Signal</keyword>
<keyword id="KW-0768">Sushi</keyword>
<comment type="subcellular location">
    <subcellularLocation>
        <location evidence="4">Secreted</location>
    </subcellularLocation>
</comment>
<comment type="alternative products">
    <event type="alternative splicing"/>
    <isoform>
        <id>Q09550-1</id>
        <name>b</name>
        <sequence type="displayed"/>
    </isoform>
    <isoform>
        <id>Q09550-2</id>
        <name>a</name>
        <sequence type="described" ref="VSP_043607 VSP_043611"/>
    </isoform>
    <isoform>
        <id>Q09550-3</id>
        <name>c</name>
        <sequence type="described" ref="VSP_043610"/>
    </isoform>
    <isoform>
        <id>Q09550-4</id>
        <name>d</name>
        <sequence type="described" ref="VSP_043608"/>
    </isoform>
    <isoform>
        <id>Q09550-5</id>
        <name>f</name>
        <sequence type="described" ref="VSP_043609"/>
    </isoform>
</comment>
<feature type="signal peptide" evidence="1">
    <location>
        <begin position="1"/>
        <end position="20"/>
    </location>
</feature>
<feature type="chain" id="PRO_0000014282" description="Uncharacterized protein F26C11.3">
    <location>
        <begin position="21"/>
        <end position="1312"/>
    </location>
</feature>
<feature type="domain" description="Sushi" evidence="2">
    <location>
        <begin position="1239"/>
        <end position="1306"/>
    </location>
</feature>
<feature type="region of interest" description="Disordered" evidence="3">
    <location>
        <begin position="299"/>
        <end position="503"/>
    </location>
</feature>
<feature type="region of interest" description="Disordered" evidence="3">
    <location>
        <begin position="565"/>
        <end position="609"/>
    </location>
</feature>
<feature type="region of interest" description="Disordered" evidence="3">
    <location>
        <begin position="645"/>
        <end position="692"/>
    </location>
</feature>
<feature type="region of interest" description="Disordered" evidence="3">
    <location>
        <begin position="749"/>
        <end position="775"/>
    </location>
</feature>
<feature type="region of interest" description="Disordered" evidence="3">
    <location>
        <begin position="812"/>
        <end position="864"/>
    </location>
</feature>
<feature type="region of interest" description="Disordered" evidence="3">
    <location>
        <begin position="899"/>
        <end position="942"/>
    </location>
</feature>
<feature type="region of interest" description="Disordered" evidence="3">
    <location>
        <begin position="1048"/>
        <end position="1079"/>
    </location>
</feature>
<feature type="region of interest" description="Disordered" evidence="3">
    <location>
        <begin position="1114"/>
        <end position="1165"/>
    </location>
</feature>
<feature type="compositionally biased region" description="Low complexity" evidence="3">
    <location>
        <begin position="299"/>
        <end position="344"/>
    </location>
</feature>
<feature type="compositionally biased region" description="Polar residues" evidence="3">
    <location>
        <begin position="345"/>
        <end position="357"/>
    </location>
</feature>
<feature type="compositionally biased region" description="Low complexity" evidence="3">
    <location>
        <begin position="365"/>
        <end position="503"/>
    </location>
</feature>
<feature type="compositionally biased region" description="Basic and acidic residues" evidence="3">
    <location>
        <begin position="565"/>
        <end position="574"/>
    </location>
</feature>
<feature type="compositionally biased region" description="Low complexity" evidence="3">
    <location>
        <begin position="576"/>
        <end position="609"/>
    </location>
</feature>
<feature type="compositionally biased region" description="Basic and acidic residues" evidence="3">
    <location>
        <begin position="645"/>
        <end position="659"/>
    </location>
</feature>
<feature type="compositionally biased region" description="Low complexity" evidence="3">
    <location>
        <begin position="660"/>
        <end position="692"/>
    </location>
</feature>
<feature type="compositionally biased region" description="Basic and acidic residues" evidence="3">
    <location>
        <begin position="813"/>
        <end position="825"/>
    </location>
</feature>
<feature type="compositionally biased region" description="Low complexity" evidence="3">
    <location>
        <begin position="826"/>
        <end position="864"/>
    </location>
</feature>
<feature type="compositionally biased region" description="Polar residues" evidence="3">
    <location>
        <begin position="899"/>
        <end position="908"/>
    </location>
</feature>
<feature type="compositionally biased region" description="Low complexity" evidence="3">
    <location>
        <begin position="914"/>
        <end position="942"/>
    </location>
</feature>
<feature type="compositionally biased region" description="Polar residues" evidence="3">
    <location>
        <begin position="1048"/>
        <end position="1057"/>
    </location>
</feature>
<feature type="compositionally biased region" description="Low complexity" evidence="3">
    <location>
        <begin position="1063"/>
        <end position="1076"/>
    </location>
</feature>
<feature type="compositionally biased region" description="Polar residues" evidence="3">
    <location>
        <begin position="1114"/>
        <end position="1123"/>
    </location>
</feature>
<feature type="compositionally biased region" description="Low complexity" evidence="3">
    <location>
        <begin position="1130"/>
        <end position="1154"/>
    </location>
</feature>
<feature type="compositionally biased region" description="Polar residues" evidence="3">
    <location>
        <begin position="1155"/>
        <end position="1164"/>
    </location>
</feature>
<feature type="disulfide bond" evidence="2">
    <location>
        <begin position="1241"/>
        <end position="1291"/>
    </location>
</feature>
<feature type="disulfide bond" evidence="2">
    <location>
        <begin position="1273"/>
        <end position="1304"/>
    </location>
</feature>
<feature type="splice variant" id="VSP_043607" description="In isoform a." evidence="4">
    <original>MRNNLIYTMFLSCLHFETFCQNTTTSNDDCEALSQDLDNKNPVECCTTEAFDFLDKKYPNWRKVNKYVRSPYINELRFMGCCNKT</original>
    <variation>MTLVRNLVVISLLIPKIIAFDCFWLSNPIYNNGLCCTPQAVSYLDNKHSPVWRMSISNINLVADIYINDAMAQGLCRSS</variation>
    <location>
        <begin position="1"/>
        <end position="85"/>
    </location>
</feature>
<feature type="splice variant" id="VSP_043608" description="In isoform d." evidence="4">
    <original>RNNLIYTMFLSCLHFETFCQNTTTSNDDCEALSQDLDNKNPVECCTTEAFDFLDKKYPNWRKVNKYVRSPYINELRFMGCCNKTISTSAILTTTPLTTSSTTLEIYTTDS</original>
    <variation>KNKFICLILLCSLLSGTFCQGQRYHCGRAFGDLDIQNTSECCNSAAYEYLETKYSQLWFSSSEENRTAYFYELKSNGFCGNNSSTASIATTEEVTTSLTTLEPSTADL</variation>
    <location>
        <begin position="2"/>
        <end position="111"/>
    </location>
</feature>
<feature type="splice variant" id="VSP_043609" description="In isoform f." evidence="4">
    <original>RNNLIYTMFLSCLHFETFCQNTTTSNDDCEALSQDLDNKNPVECCTTEAFDFLDKKYPNWRKVNKYVRSPYINELRFMGCCNKTISTSAILTTTPLTTSSTTLEIYTTDS</original>
    <variation>QLSVLLCIFLTLLTRTSLCQTVDCNWLALPNYLMNYNKECCTSESVTYLNTKYGQDWKKAWLDRVNYVTELKSNGICGVLAFKTTTIETSTKFIPIVRI</variation>
    <location>
        <begin position="2"/>
        <end position="111"/>
    </location>
</feature>
<feature type="splice variant" id="VSP_043610" description="In isoform c." evidence="4">
    <original>NLIYTMFLSCLHFETFCQNTTTSNDDCEALSQDLDNKNPVECCTTEAFDFLDKKYPNWRKVNKYVRSPYINELRFMGCCNKTISTSAILTTTPLTTSSTTLEIYTTDS</original>
    <variation>KLVYSAILVSFLLSETVCQSLGFYPCSSLTRGLDSENSSECCTKDAFNYLYSKDLFWPNRSNETRSSYISELRSKGYCRISSSTFLFSTTEELTTTLTISETSTTDF</variation>
    <location>
        <begin position="4"/>
        <end position="111"/>
    </location>
</feature>
<feature type="splice variant" id="VSP_043611" description="In isoform a." evidence="4">
    <location>
        <begin position="87"/>
        <end position="111"/>
    </location>
</feature>
<organism>
    <name type="scientific">Caenorhabditis elegans</name>
    <dbReference type="NCBI Taxonomy" id="6239"/>
    <lineage>
        <taxon>Eukaryota</taxon>
        <taxon>Metazoa</taxon>
        <taxon>Ecdysozoa</taxon>
        <taxon>Nematoda</taxon>
        <taxon>Chromadorea</taxon>
        <taxon>Rhabditida</taxon>
        <taxon>Rhabditina</taxon>
        <taxon>Rhabditomorpha</taxon>
        <taxon>Rhabditoidea</taxon>
        <taxon>Rhabditidae</taxon>
        <taxon>Peloderinae</taxon>
        <taxon>Caenorhabditis</taxon>
    </lineage>
</organism>
<accession>Q09550</accession>
<accession>B5BM18</accession>
<accession>B5BM19</accession>
<accession>B5BM20</accession>
<accession>B5BM21</accession>
<protein>
    <recommendedName>
        <fullName>Uncharacterized protein F26C11.3</fullName>
    </recommendedName>
</protein>
<sequence length="1312" mass="140460">MRNNLIYTMFLSCLHFETFCQNTTTSNDDCEALSQDLDNKNPVECCTTEAFDFLDKKYPNWRKVNKYVRSPYINELRFMGCCNKTISTSAILTTTPLTTSSTTLEIYTTDSDSTTAETTSVPTTTTSIQCGVLANTSCCNLKVTECLSKQYEDWRNVTLIKGYERELEKCDCVLTSSSTETGTVKFLDREFFRVFSSAEIASTTSLPTTTSPSLNCYWLSEPSNFSEWIDGKQTNLRYNGGCCSETSIQVLNSSDSTRWILTTSDSWNKANALINLLYCTPNACPQQSMLWTNCSNLSTTTSSSTMLSSTTLLTTETETRESSSTGSTQTTTPSTEPSTTITTPMEQSSTVSSVQKTRTSEDKPSSSTTVPTSASTSESSTSSPMAETSSSSTTSQSSPASTSTVPESSTVGSTPTTGLTTLSTNEQSTSTSSGGHSTSTFGTTSETPETSTDFTATSTSSSSDSSTQSSNAQTSTIENGSTTTNFTSAPSTSSTPATPTTTYNWPTGGTTWMLPSGEIVQAHKTFFSSFNYFQVLSESLIAYPNCTTVLMQLIYNPRTKETRTEITSDAEGCKKTSSTPTPSSTSVHSTTATPSTTPGTTTYNWPTGGTTRMLPSGEIILSESLIAYPNCTTVLMQLIYNPSTKETRTETTTDADGCKKTSSTSSSTPSLKHSTTPTPTPGTTTYNWPTGGTTRMLPSGEIILSESLIAYPNCTTVLMQLIYTPSTNKTRTETTTDTEGCKKTSTISSSSSKFSITPTPTPSSGTTTYNWPTGGTTRTLPSGEIILSESLIAFQNCTTVLMQLIYNPSTNKTRTETTTDAEGCKKTSSTSKISTTPTSPTSSKPTPTSTSMTTTYNWPTGGTTRTLPSGEIILSESLIAYKNCTTVLMQLIYNPSTNKTRTETTTDAQGCKATSSTSLKPTSPSSSTASPPTTTYNWPTGGTTRTLPSGEIILSESLIAYKNCTTVLMQLIYNPSTNKTRTETTTDAQGCKATITTPTPITTTYNWPTGGTTRTLPSGEIILSESLIAYKNCTTVLMQLIYNPSTNKTRTETTSDAQGCKATSTTQTPTTFNWPTGGTTRTLPSGEIILSESLIAYKNCTTVLMQLIYNPSKNTTRTETTSDAEGCKATSSGTTSTMSPGTTGGTTVSRTTNSNNPIDSSTLETTTFAWPTGGTTRMLPSGEIIISESLTAFPNCTTVLKQLVYNPTTNTTRTDTISDSEGCKATSTAKPTTVISSTATCSSLNLNLNSTTRPTSSEIKDSYSVGEKIYHICEKDYSFEIALQPLKIYQCLNGGAWSGTPEKCVATGKSEL</sequence>